<organism>
    <name type="scientific">Equus caballus</name>
    <name type="common">Horse</name>
    <dbReference type="NCBI Taxonomy" id="9796"/>
    <lineage>
        <taxon>Eukaryota</taxon>
        <taxon>Metazoa</taxon>
        <taxon>Chordata</taxon>
        <taxon>Craniata</taxon>
        <taxon>Vertebrata</taxon>
        <taxon>Euteleostomi</taxon>
        <taxon>Mammalia</taxon>
        <taxon>Eutheria</taxon>
        <taxon>Laurasiatheria</taxon>
        <taxon>Perissodactyla</taxon>
        <taxon>Equidae</taxon>
        <taxon>Equus</taxon>
    </lineage>
</organism>
<feature type="signal peptide" evidence="4">
    <location>
        <begin position="1"/>
        <end position="20"/>
    </location>
</feature>
<feature type="chain" id="PRO_0000252695" description="Tumor necrosis factor receptor superfamily member 5">
    <location>
        <begin position="21"/>
        <end position="280"/>
    </location>
</feature>
<feature type="topological domain" description="Extracellular" evidence="4">
    <location>
        <begin position="21"/>
        <end position="194"/>
    </location>
</feature>
<feature type="transmembrane region" description="Helical" evidence="4">
    <location>
        <begin position="195"/>
        <end position="215"/>
    </location>
</feature>
<feature type="topological domain" description="Cytoplasmic" evidence="4">
    <location>
        <begin position="216"/>
        <end position="280"/>
    </location>
</feature>
<feature type="repeat" description="TNFR-Cys 1">
    <location>
        <begin position="25"/>
        <end position="60"/>
    </location>
</feature>
<feature type="repeat" description="TNFR-Cys 2">
    <location>
        <begin position="61"/>
        <end position="103"/>
    </location>
</feature>
<feature type="repeat" description="TNFR-Cys 3">
    <location>
        <begin position="104"/>
        <end position="144"/>
    </location>
</feature>
<feature type="repeat" description="TNFR-Cys 4">
    <location>
        <begin position="145"/>
        <end position="187"/>
    </location>
</feature>
<feature type="glycosylation site" description="N-linked (GlcNAc...) asparagine" evidence="4">
    <location>
        <position position="180"/>
    </location>
</feature>
<feature type="disulfide bond" evidence="5">
    <location>
        <begin position="26"/>
        <end position="37"/>
    </location>
</feature>
<feature type="disulfide bond" evidence="5">
    <location>
        <begin position="38"/>
        <end position="51"/>
    </location>
</feature>
<feature type="disulfide bond" evidence="5">
    <location>
        <begin position="41"/>
        <end position="59"/>
    </location>
</feature>
<feature type="disulfide bond" evidence="5">
    <location>
        <begin position="62"/>
        <end position="77"/>
    </location>
</feature>
<feature type="disulfide bond" evidence="5">
    <location>
        <begin position="83"/>
        <end position="103"/>
    </location>
</feature>
<feature type="disulfide bond" evidence="5">
    <location>
        <begin position="105"/>
        <end position="119"/>
    </location>
</feature>
<feature type="disulfide bond" evidence="5">
    <location>
        <begin position="111"/>
        <end position="116"/>
    </location>
</feature>
<feature type="disulfide bond" evidence="5">
    <location>
        <begin position="125"/>
        <end position="143"/>
    </location>
</feature>
<gene>
    <name type="primary">CD40</name>
    <name type="synonym">TNFRSF5</name>
</gene>
<keyword id="KW-1015">Disulfide bond</keyword>
<keyword id="KW-0325">Glycoprotein</keyword>
<keyword id="KW-0391">Immunity</keyword>
<keyword id="KW-0472">Membrane</keyword>
<keyword id="KW-0675">Receptor</keyword>
<keyword id="KW-1185">Reference proteome</keyword>
<keyword id="KW-0677">Repeat</keyword>
<keyword id="KW-0732">Signal</keyword>
<keyword id="KW-0812">Transmembrane</keyword>
<keyword id="KW-1133">Transmembrane helix</keyword>
<accession>Q3ZTK5</accession>
<sequence length="280" mass="30279">MVRLPLQCLLWGCLLTPVHPEQATACKGNQYLSGSHCCDLCPPGKKLVNDCTGITETECSPCGAGEFLDTWNRESRCHQHKYCDPNLGLQVQGTGTSTTDATCICHEGQHCSSDACESCILHSPCAPGLGVKQLATGVSDTVCEPCPVGFFSKVSSALEKCHPWTSCDTKGLVELQAGTNKTDAVCGFRNRMRALVVIPITMGVLFAVLLLSACIRKVAKEPENKALHRKVGWQDPVETVYPDDFPGPHSIAPVQETLHGCQPVTQEDGKESRISVQERQ</sequence>
<name>TNR5_HORSE</name>
<proteinExistence type="evidence at transcript level"/>
<evidence type="ECO:0000250" key="1"/>
<evidence type="ECO:0000250" key="2">
    <source>
        <dbReference type="UniProtKB" id="P25942"/>
    </source>
</evidence>
<evidence type="ECO:0000250" key="3">
    <source>
        <dbReference type="UniProtKB" id="P27512"/>
    </source>
</evidence>
<evidence type="ECO:0000255" key="4"/>
<evidence type="ECO:0000255" key="5">
    <source>
        <dbReference type="PROSITE-ProRule" id="PRU00206"/>
    </source>
</evidence>
<protein>
    <recommendedName>
        <fullName>Tumor necrosis factor receptor superfamily member 5</fullName>
    </recommendedName>
    <alternativeName>
        <fullName>B-cell surface antigen CD40</fullName>
    </alternativeName>
    <alternativeName>
        <fullName>CD40L receptor</fullName>
    </alternativeName>
    <cdAntigenName>CD40</cdAntigenName>
</protein>
<dbReference type="EMBL" id="AY514017">
    <property type="protein sequence ID" value="AAS82955.1"/>
    <property type="molecule type" value="mRNA"/>
</dbReference>
<dbReference type="RefSeq" id="NP_001075371.1">
    <property type="nucleotide sequence ID" value="NM_001081902.1"/>
</dbReference>
<dbReference type="SMR" id="Q3ZTK5"/>
<dbReference type="FunCoup" id="Q3ZTK5">
    <property type="interactions" value="403"/>
</dbReference>
<dbReference type="STRING" id="9796.ENSECAP00000014907"/>
<dbReference type="GlyCosmos" id="Q3ZTK5">
    <property type="glycosylation" value="1 site, No reported glycans"/>
</dbReference>
<dbReference type="PaxDb" id="9796-ENSECAP00000014907"/>
<dbReference type="GeneID" id="100034049"/>
<dbReference type="KEGG" id="ecb:100034049"/>
<dbReference type="CTD" id="958"/>
<dbReference type="HOGENOM" id="CLU_052667_4_0_1"/>
<dbReference type="InParanoid" id="Q3ZTK5"/>
<dbReference type="OMA" id="WTKERHC"/>
<dbReference type="OrthoDB" id="9932129at2759"/>
<dbReference type="TreeFam" id="TF331157"/>
<dbReference type="Proteomes" id="UP000002281">
    <property type="component" value="Chromosome 22"/>
</dbReference>
<dbReference type="Bgee" id="ENSECAG00000016998">
    <property type="expression patterns" value="Expressed in leukocyte and 23 other cell types or tissues"/>
</dbReference>
<dbReference type="GO" id="GO:0035631">
    <property type="term" value="C:CD40 receptor complex"/>
    <property type="evidence" value="ECO:0000318"/>
    <property type="project" value="GO_Central"/>
</dbReference>
<dbReference type="GO" id="GO:0009897">
    <property type="term" value="C:external side of plasma membrane"/>
    <property type="evidence" value="ECO:0000318"/>
    <property type="project" value="GO_Central"/>
</dbReference>
<dbReference type="GO" id="GO:0038023">
    <property type="term" value="F:signaling receptor activity"/>
    <property type="evidence" value="ECO:0007669"/>
    <property type="project" value="InterPro"/>
</dbReference>
<dbReference type="GO" id="GO:0042113">
    <property type="term" value="P:B cell activation"/>
    <property type="evidence" value="ECO:0000318"/>
    <property type="project" value="GO_Central"/>
</dbReference>
<dbReference type="GO" id="GO:0002768">
    <property type="term" value="P:immune response-regulating cell surface receptor signaling pathway"/>
    <property type="evidence" value="ECO:0000318"/>
    <property type="project" value="GO_Central"/>
</dbReference>
<dbReference type="CDD" id="cd13407">
    <property type="entry name" value="TNFRSF5"/>
    <property type="match status" value="1"/>
</dbReference>
<dbReference type="FunFam" id="2.10.50.10:FF:000041">
    <property type="entry name" value="Tumor necrosis factor receptor superfamily member 5"/>
    <property type="match status" value="1"/>
</dbReference>
<dbReference type="Gene3D" id="2.10.50.10">
    <property type="entry name" value="Tumor Necrosis Factor Receptor, subunit A, domain 2"/>
    <property type="match status" value="3"/>
</dbReference>
<dbReference type="InterPro" id="IPR001368">
    <property type="entry name" value="TNFR/NGFR_Cys_rich_reg"/>
</dbReference>
<dbReference type="InterPro" id="IPR020435">
    <property type="entry name" value="TNFR_5"/>
</dbReference>
<dbReference type="InterPro" id="IPR052135">
    <property type="entry name" value="TNFRSF5"/>
</dbReference>
<dbReference type="InterPro" id="IPR034021">
    <property type="entry name" value="TNFRSF5_N"/>
</dbReference>
<dbReference type="PANTHER" id="PTHR46875">
    <property type="entry name" value="TUMOR NECROSIS FACTOR RECEPTOR SUPERFAMILY MEMBER 5"/>
    <property type="match status" value="1"/>
</dbReference>
<dbReference type="PANTHER" id="PTHR46875:SF1">
    <property type="entry name" value="TUMOR NECROSIS FACTOR RECEPTOR SUPERFAMILY MEMBER 5"/>
    <property type="match status" value="1"/>
</dbReference>
<dbReference type="Pfam" id="PF00020">
    <property type="entry name" value="TNFR_c6"/>
    <property type="match status" value="1"/>
</dbReference>
<dbReference type="PRINTS" id="PR01922">
    <property type="entry name" value="TNFACTORR5"/>
</dbReference>
<dbReference type="SMART" id="SM00208">
    <property type="entry name" value="TNFR"/>
    <property type="match status" value="4"/>
</dbReference>
<dbReference type="SUPFAM" id="SSF57586">
    <property type="entry name" value="TNF receptor-like"/>
    <property type="match status" value="2"/>
</dbReference>
<dbReference type="PROSITE" id="PS00652">
    <property type="entry name" value="TNFR_NGFR_1"/>
    <property type="match status" value="1"/>
</dbReference>
<dbReference type="PROSITE" id="PS50050">
    <property type="entry name" value="TNFR_NGFR_2"/>
    <property type="match status" value="3"/>
</dbReference>
<comment type="function">
    <text evidence="2 3">Receptor for TNFSF5/CD40LG (By similarity). Transduces TRAF6- and MAP3K8-mediated signals that activate ERK in macrophages and B cells, leading to induction of immunoglobulin secretion (By similarity).</text>
</comment>
<comment type="subunit">
    <text evidence="1">Monomer and homodimer. Interacts with TRAF1, TRAF2, TRAF3, TRAF5 and TRAF6. Interacts with TRAF6 and MAP3K8; the interaction is required for ERK activation (By similarity).</text>
</comment>
<comment type="subcellular location">
    <subcellularLocation>
        <location>Membrane</location>
        <topology>Single-pass type I membrane protein</topology>
    </subcellularLocation>
</comment>
<reference key="1">
    <citation type="submission" date="2003-12" db="EMBL/GenBank/DDBJ databases">
        <title>The CD40 gene of the horse.</title>
        <authorList>
            <person name="Wagner B."/>
            <person name="Antczak D.F."/>
        </authorList>
    </citation>
    <scope>NUCLEOTIDE SEQUENCE [MRNA]</scope>
</reference>